<sequence>MAQNSVFFPDEFLAQMREALPAHLSFDAFIAACQRPLRRSIRVNTLKISVEDFLALVSPYRWQLTPVPWCAEGFWIEREDEDALPLGSTAEHLSGLFYIQEASSMLPVTALFAEDNQPERVMDVAAAPGSKTTQIAARMGNRGVILANEFSASRVKVLHANISRCGISNVALTHFDGRVFGAALPESFDAILLDAPCSGEGVVRKDPDALKNWSVASNLEIAATQRELIDSAFHALRPGGMLVYSTCTLNRDENESVCLWLKEQYPQAVEFLPLDSLFPSATEAVTPEGFLHVFPQIFDCEGFFVARMRKTAVIEPLPAPKYKVGNFPFAPLKGRETAQIVAAAQKAGLQWDENLRLWQRDKEIWLFPVEVETMIGKVRFSRIGMRLAEVHNKGYRWQHEAVIALANDANTFALTHTEAEEWYRGRDVYPELAPTSDEVVVTYQGFPLGLAKKIGSRLKNSYPRELVRDGRLFTVHDSAN</sequence>
<accession>A4WBJ4</accession>
<organism>
    <name type="scientific">Enterobacter sp. (strain 638)</name>
    <dbReference type="NCBI Taxonomy" id="399742"/>
    <lineage>
        <taxon>Bacteria</taxon>
        <taxon>Pseudomonadati</taxon>
        <taxon>Pseudomonadota</taxon>
        <taxon>Gammaproteobacteria</taxon>
        <taxon>Enterobacterales</taxon>
        <taxon>Enterobacteriaceae</taxon>
        <taxon>Enterobacter</taxon>
    </lineage>
</organism>
<keyword id="KW-0963">Cytoplasm</keyword>
<keyword id="KW-0489">Methyltransferase</keyword>
<keyword id="KW-0694">RNA-binding</keyword>
<keyword id="KW-0698">rRNA processing</keyword>
<keyword id="KW-0949">S-adenosyl-L-methionine</keyword>
<keyword id="KW-0808">Transferase</keyword>
<name>RSMF_ENT38</name>
<reference key="1">
    <citation type="journal article" date="2010" name="PLoS Genet.">
        <title>Genome sequence of the plant growth promoting endophytic bacterium Enterobacter sp. 638.</title>
        <authorList>
            <person name="Taghavi S."/>
            <person name="van der Lelie D."/>
            <person name="Hoffman A."/>
            <person name="Zhang Y.B."/>
            <person name="Walla M.D."/>
            <person name="Vangronsveld J."/>
            <person name="Newman L."/>
            <person name="Monchy S."/>
        </authorList>
    </citation>
    <scope>NUCLEOTIDE SEQUENCE [LARGE SCALE GENOMIC DNA]</scope>
    <source>
        <strain>638</strain>
    </source>
</reference>
<gene>
    <name evidence="1" type="primary">rsmF</name>
    <name type="ordered locus">Ent638_2405</name>
</gene>
<comment type="function">
    <text evidence="1">Specifically methylates the cytosine at position 1407 (m5C1407) of 16S rRNA.</text>
</comment>
<comment type="catalytic activity">
    <reaction evidence="1">
        <text>cytidine(1407) in 16S rRNA + S-adenosyl-L-methionine = 5-methylcytidine(1407) in 16S rRNA + S-adenosyl-L-homocysteine + H(+)</text>
        <dbReference type="Rhea" id="RHEA:42756"/>
        <dbReference type="Rhea" id="RHEA-COMP:10223"/>
        <dbReference type="Rhea" id="RHEA-COMP:10224"/>
        <dbReference type="ChEBI" id="CHEBI:15378"/>
        <dbReference type="ChEBI" id="CHEBI:57856"/>
        <dbReference type="ChEBI" id="CHEBI:59789"/>
        <dbReference type="ChEBI" id="CHEBI:74483"/>
        <dbReference type="ChEBI" id="CHEBI:82748"/>
        <dbReference type="EC" id="2.1.1.178"/>
    </reaction>
</comment>
<comment type="subcellular location">
    <subcellularLocation>
        <location evidence="1">Cytoplasm</location>
    </subcellularLocation>
</comment>
<comment type="similarity">
    <text evidence="1">Belongs to the class I-like SAM-binding methyltransferase superfamily. RsmB/NOP family.</text>
</comment>
<feature type="chain" id="PRO_1000069272" description="Ribosomal RNA small subunit methyltransferase F">
    <location>
        <begin position="1"/>
        <end position="480"/>
    </location>
</feature>
<feature type="active site" description="Nucleophile" evidence="1">
    <location>
        <position position="247"/>
    </location>
</feature>
<feature type="binding site" evidence="1">
    <location>
        <begin position="125"/>
        <end position="131"/>
    </location>
    <ligand>
        <name>S-adenosyl-L-methionine</name>
        <dbReference type="ChEBI" id="CHEBI:59789"/>
    </ligand>
</feature>
<feature type="binding site" evidence="1">
    <location>
        <position position="149"/>
    </location>
    <ligand>
        <name>S-adenosyl-L-methionine</name>
        <dbReference type="ChEBI" id="CHEBI:59789"/>
    </ligand>
</feature>
<feature type="binding site" evidence="1">
    <location>
        <position position="176"/>
    </location>
    <ligand>
        <name>S-adenosyl-L-methionine</name>
        <dbReference type="ChEBI" id="CHEBI:59789"/>
    </ligand>
</feature>
<feature type="binding site" evidence="1">
    <location>
        <position position="194"/>
    </location>
    <ligand>
        <name>S-adenosyl-L-methionine</name>
        <dbReference type="ChEBI" id="CHEBI:59789"/>
    </ligand>
</feature>
<evidence type="ECO:0000255" key="1">
    <source>
        <dbReference type="HAMAP-Rule" id="MF_01579"/>
    </source>
</evidence>
<protein>
    <recommendedName>
        <fullName evidence="1">Ribosomal RNA small subunit methyltransferase F</fullName>
        <ecNumber evidence="1">2.1.1.178</ecNumber>
    </recommendedName>
    <alternativeName>
        <fullName evidence="1">16S rRNA m5C1407 methyltransferase</fullName>
    </alternativeName>
    <alternativeName>
        <fullName evidence="1">rRNA (cytosine-C(5)-)-methyltransferase RsmF</fullName>
    </alternativeName>
</protein>
<dbReference type="EC" id="2.1.1.178" evidence="1"/>
<dbReference type="EMBL" id="CP000653">
    <property type="protein sequence ID" value="ABP61074.1"/>
    <property type="molecule type" value="Genomic_DNA"/>
</dbReference>
<dbReference type="RefSeq" id="WP_015959407.1">
    <property type="nucleotide sequence ID" value="NC_009436.1"/>
</dbReference>
<dbReference type="SMR" id="A4WBJ4"/>
<dbReference type="STRING" id="399742.Ent638_2405"/>
<dbReference type="KEGG" id="ent:Ent638_2405"/>
<dbReference type="eggNOG" id="COG0144">
    <property type="taxonomic scope" value="Bacteria"/>
</dbReference>
<dbReference type="eggNOG" id="COG3270">
    <property type="taxonomic scope" value="Bacteria"/>
</dbReference>
<dbReference type="HOGENOM" id="CLU_005316_6_2_6"/>
<dbReference type="OrthoDB" id="9810297at2"/>
<dbReference type="Proteomes" id="UP000000230">
    <property type="component" value="Chromosome"/>
</dbReference>
<dbReference type="GO" id="GO:0005737">
    <property type="term" value="C:cytoplasm"/>
    <property type="evidence" value="ECO:0007669"/>
    <property type="project" value="UniProtKB-SubCell"/>
</dbReference>
<dbReference type="GO" id="GO:0003723">
    <property type="term" value="F:RNA binding"/>
    <property type="evidence" value="ECO:0007669"/>
    <property type="project" value="UniProtKB-KW"/>
</dbReference>
<dbReference type="GO" id="GO:0009383">
    <property type="term" value="F:rRNA (cytosine-C5-)-methyltransferase activity"/>
    <property type="evidence" value="ECO:0007669"/>
    <property type="project" value="TreeGrafter"/>
</dbReference>
<dbReference type="GO" id="GO:0070475">
    <property type="term" value="P:rRNA base methylation"/>
    <property type="evidence" value="ECO:0007669"/>
    <property type="project" value="TreeGrafter"/>
</dbReference>
<dbReference type="CDD" id="cd02440">
    <property type="entry name" value="AdoMet_MTases"/>
    <property type="match status" value="1"/>
</dbReference>
<dbReference type="FunFam" id="3.10.450.720:FF:000001">
    <property type="entry name" value="Ribosomal RNA small subunit methyltransferase F"/>
    <property type="match status" value="1"/>
</dbReference>
<dbReference type="FunFam" id="3.40.50.150:FF:000079">
    <property type="entry name" value="Ribosomal RNA small subunit methyltransferase F"/>
    <property type="match status" value="1"/>
</dbReference>
<dbReference type="Gene3D" id="3.10.450.720">
    <property type="match status" value="1"/>
</dbReference>
<dbReference type="Gene3D" id="3.40.50.150">
    <property type="entry name" value="Vaccinia Virus protein VP39"/>
    <property type="match status" value="1"/>
</dbReference>
<dbReference type="HAMAP" id="MF_01579">
    <property type="entry name" value="16SrRNA_methyltr_F"/>
    <property type="match status" value="1"/>
</dbReference>
<dbReference type="InterPro" id="IPR031341">
    <property type="entry name" value="Methyltr_RsmF_N"/>
</dbReference>
<dbReference type="InterPro" id="IPR049560">
    <property type="entry name" value="MeTrfase_RsmB-F_NOP2_cat"/>
</dbReference>
<dbReference type="InterPro" id="IPR001678">
    <property type="entry name" value="MeTrfase_RsmB-F_NOP2_dom"/>
</dbReference>
<dbReference type="InterPro" id="IPR027391">
    <property type="entry name" value="Nol1_Nop2_Fmu_2"/>
</dbReference>
<dbReference type="InterPro" id="IPR011023">
    <property type="entry name" value="Nop2p"/>
</dbReference>
<dbReference type="InterPro" id="IPR023267">
    <property type="entry name" value="RCMT"/>
</dbReference>
<dbReference type="InterPro" id="IPR023545">
    <property type="entry name" value="rRNA_ssu_MeTfrase_F"/>
</dbReference>
<dbReference type="InterPro" id="IPR018314">
    <property type="entry name" value="RsmB/NOL1/NOP2-like_CS"/>
</dbReference>
<dbReference type="InterPro" id="IPR029063">
    <property type="entry name" value="SAM-dependent_MTases_sf"/>
</dbReference>
<dbReference type="InterPro" id="IPR048457">
    <property type="entry name" value="YebU_pre-PUA_dom"/>
</dbReference>
<dbReference type="NCBIfam" id="TIGR00446">
    <property type="entry name" value="nop2p"/>
    <property type="match status" value="1"/>
</dbReference>
<dbReference type="NCBIfam" id="NF008898">
    <property type="entry name" value="PRK11933.1"/>
    <property type="match status" value="1"/>
</dbReference>
<dbReference type="PANTHER" id="PTHR22807:SF30">
    <property type="entry name" value="28S RRNA (CYTOSINE(4447)-C(5))-METHYLTRANSFERASE-RELATED"/>
    <property type="match status" value="1"/>
</dbReference>
<dbReference type="PANTHER" id="PTHR22807">
    <property type="entry name" value="NOP2 YEAST -RELATED NOL1/NOP2/FMU SUN DOMAIN-CONTAINING"/>
    <property type="match status" value="1"/>
</dbReference>
<dbReference type="Pfam" id="PF01189">
    <property type="entry name" value="Methyltr_RsmB-F"/>
    <property type="match status" value="1"/>
</dbReference>
<dbReference type="Pfam" id="PF17125">
    <property type="entry name" value="Methyltr_RsmF_N"/>
    <property type="match status" value="1"/>
</dbReference>
<dbReference type="Pfam" id="PF13636">
    <property type="entry name" value="Methyltranf_PUA"/>
    <property type="match status" value="1"/>
</dbReference>
<dbReference type="Pfam" id="PF21150">
    <property type="entry name" value="YebU_pre-PUA_dom"/>
    <property type="match status" value="1"/>
</dbReference>
<dbReference type="PRINTS" id="PR02008">
    <property type="entry name" value="RCMTFAMILY"/>
</dbReference>
<dbReference type="SUPFAM" id="SSF53335">
    <property type="entry name" value="S-adenosyl-L-methionine-dependent methyltransferases"/>
    <property type="match status" value="1"/>
</dbReference>
<dbReference type="PROSITE" id="PS01153">
    <property type="entry name" value="NOL1_NOP2_SUN"/>
    <property type="match status" value="1"/>
</dbReference>
<dbReference type="PROSITE" id="PS51686">
    <property type="entry name" value="SAM_MT_RSMB_NOP"/>
    <property type="match status" value="1"/>
</dbReference>
<proteinExistence type="inferred from homology"/>